<reference key="1">
    <citation type="journal article" date="2008" name="DNA Res.">
        <title>Complete genome sequence of Finegoldia magna, an anaerobic opportunistic pathogen.</title>
        <authorList>
            <person name="Goto T."/>
            <person name="Yamashita A."/>
            <person name="Hirakawa H."/>
            <person name="Matsutani M."/>
            <person name="Todo K."/>
            <person name="Ohshima K."/>
            <person name="Toh H."/>
            <person name="Miyamoto K."/>
            <person name="Kuhara S."/>
            <person name="Hattori M."/>
            <person name="Shimizu T."/>
            <person name="Akimoto S."/>
        </authorList>
    </citation>
    <scope>NUCLEOTIDE SEQUENCE [LARGE SCALE GENOMIC DNA]</scope>
    <source>
        <strain>ATCC 29328 / DSM 20472 / WAL 2508</strain>
    </source>
</reference>
<organism>
    <name type="scientific">Finegoldia magna (strain ATCC 29328 / DSM 20472 / WAL 2508)</name>
    <name type="common">Peptostreptococcus magnus</name>
    <dbReference type="NCBI Taxonomy" id="334413"/>
    <lineage>
        <taxon>Bacteria</taxon>
        <taxon>Bacillati</taxon>
        <taxon>Bacillota</taxon>
        <taxon>Tissierellia</taxon>
        <taxon>Tissierellales</taxon>
        <taxon>Peptoniphilaceae</taxon>
        <taxon>Finegoldia</taxon>
    </lineage>
</organism>
<name>RL31_FINM2</name>
<sequence>MKKDLHPEYHEATVTCASCGNTFKVGSTKENINVEVCSQCHPFYTGRQRFVEHGGRVEKFKKKYNMD</sequence>
<proteinExistence type="inferred from homology"/>
<evidence type="ECO:0000255" key="1">
    <source>
        <dbReference type="HAMAP-Rule" id="MF_00501"/>
    </source>
</evidence>
<evidence type="ECO:0000305" key="2"/>
<keyword id="KW-1185">Reference proteome</keyword>
<keyword id="KW-0687">Ribonucleoprotein</keyword>
<keyword id="KW-0689">Ribosomal protein</keyword>
<keyword id="KW-0694">RNA-binding</keyword>
<keyword id="KW-0699">rRNA-binding</keyword>
<gene>
    <name evidence="1" type="primary">rpmE</name>
    <name type="ordered locus">FMG_1091</name>
</gene>
<accession>B0S2B9</accession>
<protein>
    <recommendedName>
        <fullName evidence="1">Large ribosomal subunit protein bL31</fullName>
    </recommendedName>
    <alternativeName>
        <fullName evidence="2">50S ribosomal protein L31</fullName>
    </alternativeName>
</protein>
<dbReference type="EMBL" id="AP008971">
    <property type="protein sequence ID" value="BAG08509.1"/>
    <property type="molecule type" value="Genomic_DNA"/>
</dbReference>
<dbReference type="RefSeq" id="WP_002836835.1">
    <property type="nucleotide sequence ID" value="NC_010376.1"/>
</dbReference>
<dbReference type="SMR" id="B0S2B9"/>
<dbReference type="STRING" id="334413.FMG_1091"/>
<dbReference type="GeneID" id="60840483"/>
<dbReference type="KEGG" id="fma:FMG_1091"/>
<dbReference type="eggNOG" id="COG0254">
    <property type="taxonomic scope" value="Bacteria"/>
</dbReference>
<dbReference type="HOGENOM" id="CLU_114306_4_3_9"/>
<dbReference type="Proteomes" id="UP000001319">
    <property type="component" value="Chromosome"/>
</dbReference>
<dbReference type="GO" id="GO:1990904">
    <property type="term" value="C:ribonucleoprotein complex"/>
    <property type="evidence" value="ECO:0007669"/>
    <property type="project" value="UniProtKB-KW"/>
</dbReference>
<dbReference type="GO" id="GO:0005840">
    <property type="term" value="C:ribosome"/>
    <property type="evidence" value="ECO:0007669"/>
    <property type="project" value="UniProtKB-KW"/>
</dbReference>
<dbReference type="GO" id="GO:0019843">
    <property type="term" value="F:rRNA binding"/>
    <property type="evidence" value="ECO:0007669"/>
    <property type="project" value="UniProtKB-KW"/>
</dbReference>
<dbReference type="GO" id="GO:0003735">
    <property type="term" value="F:structural constituent of ribosome"/>
    <property type="evidence" value="ECO:0007669"/>
    <property type="project" value="InterPro"/>
</dbReference>
<dbReference type="GO" id="GO:0006412">
    <property type="term" value="P:translation"/>
    <property type="evidence" value="ECO:0007669"/>
    <property type="project" value="UniProtKB-UniRule"/>
</dbReference>
<dbReference type="Gene3D" id="4.10.830.30">
    <property type="entry name" value="Ribosomal protein L31"/>
    <property type="match status" value="1"/>
</dbReference>
<dbReference type="HAMAP" id="MF_00501">
    <property type="entry name" value="Ribosomal_bL31_1"/>
    <property type="match status" value="1"/>
</dbReference>
<dbReference type="InterPro" id="IPR034704">
    <property type="entry name" value="Ribosomal_bL28/bL31-like_sf"/>
</dbReference>
<dbReference type="InterPro" id="IPR002150">
    <property type="entry name" value="Ribosomal_bL31"/>
</dbReference>
<dbReference type="InterPro" id="IPR027491">
    <property type="entry name" value="Ribosomal_bL31_A"/>
</dbReference>
<dbReference type="InterPro" id="IPR042105">
    <property type="entry name" value="Ribosomal_bL31_sf"/>
</dbReference>
<dbReference type="NCBIfam" id="TIGR00105">
    <property type="entry name" value="L31"/>
    <property type="match status" value="1"/>
</dbReference>
<dbReference type="NCBIfam" id="NF000612">
    <property type="entry name" value="PRK00019.1"/>
    <property type="match status" value="1"/>
</dbReference>
<dbReference type="NCBIfam" id="NF001809">
    <property type="entry name" value="PRK00528.1"/>
    <property type="match status" value="1"/>
</dbReference>
<dbReference type="PANTHER" id="PTHR33280">
    <property type="entry name" value="50S RIBOSOMAL PROTEIN L31, CHLOROPLASTIC"/>
    <property type="match status" value="1"/>
</dbReference>
<dbReference type="PANTHER" id="PTHR33280:SF1">
    <property type="entry name" value="LARGE RIBOSOMAL SUBUNIT PROTEIN BL31C"/>
    <property type="match status" value="1"/>
</dbReference>
<dbReference type="Pfam" id="PF01197">
    <property type="entry name" value="Ribosomal_L31"/>
    <property type="match status" value="1"/>
</dbReference>
<dbReference type="PRINTS" id="PR01249">
    <property type="entry name" value="RIBOSOMALL31"/>
</dbReference>
<dbReference type="SUPFAM" id="SSF143800">
    <property type="entry name" value="L28p-like"/>
    <property type="match status" value="1"/>
</dbReference>
<dbReference type="PROSITE" id="PS01143">
    <property type="entry name" value="RIBOSOMAL_L31"/>
    <property type="match status" value="1"/>
</dbReference>
<comment type="function">
    <text evidence="1">Binds the 23S rRNA.</text>
</comment>
<comment type="subunit">
    <text evidence="1">Part of the 50S ribosomal subunit.</text>
</comment>
<comment type="similarity">
    <text evidence="1">Belongs to the bacterial ribosomal protein bL31 family. Type A subfamily.</text>
</comment>
<feature type="chain" id="PRO_1000126628" description="Large ribosomal subunit protein bL31">
    <location>
        <begin position="1"/>
        <end position="67"/>
    </location>
</feature>